<dbReference type="EC" id="4.4.1.21" evidence="1"/>
<dbReference type="EMBL" id="AM260522">
    <property type="protein sequence ID" value="CAK00187.1"/>
    <property type="molecule type" value="Genomic_DNA"/>
</dbReference>
<dbReference type="RefSeq" id="WP_011578277.1">
    <property type="nucleotide sequence ID" value="NC_008229.1"/>
</dbReference>
<dbReference type="SMR" id="Q17VY9"/>
<dbReference type="STRING" id="382638.Hac_1463"/>
<dbReference type="GeneID" id="31758747"/>
<dbReference type="KEGG" id="hac:Hac_1463"/>
<dbReference type="eggNOG" id="COG1854">
    <property type="taxonomic scope" value="Bacteria"/>
</dbReference>
<dbReference type="HOGENOM" id="CLU_107531_0_0_7"/>
<dbReference type="BioCyc" id="HACI382638:HAC_RS06220-MONOMER"/>
<dbReference type="Proteomes" id="UP000000775">
    <property type="component" value="Chromosome"/>
</dbReference>
<dbReference type="GO" id="GO:0005506">
    <property type="term" value="F:iron ion binding"/>
    <property type="evidence" value="ECO:0007669"/>
    <property type="project" value="InterPro"/>
</dbReference>
<dbReference type="GO" id="GO:0043768">
    <property type="term" value="F:S-ribosylhomocysteine lyase activity"/>
    <property type="evidence" value="ECO:0007669"/>
    <property type="project" value="UniProtKB-UniRule"/>
</dbReference>
<dbReference type="GO" id="GO:0009372">
    <property type="term" value="P:quorum sensing"/>
    <property type="evidence" value="ECO:0007669"/>
    <property type="project" value="UniProtKB-UniRule"/>
</dbReference>
<dbReference type="Gene3D" id="3.30.1360.80">
    <property type="entry name" value="S-ribosylhomocysteinase (LuxS)"/>
    <property type="match status" value="1"/>
</dbReference>
<dbReference type="HAMAP" id="MF_00091">
    <property type="entry name" value="LuxS"/>
    <property type="match status" value="1"/>
</dbReference>
<dbReference type="InterPro" id="IPR037005">
    <property type="entry name" value="LuxS_sf"/>
</dbReference>
<dbReference type="InterPro" id="IPR011249">
    <property type="entry name" value="Metalloenz_LuxS/M16"/>
</dbReference>
<dbReference type="InterPro" id="IPR003815">
    <property type="entry name" value="S-ribosylhomocysteinase"/>
</dbReference>
<dbReference type="NCBIfam" id="NF002604">
    <property type="entry name" value="PRK02260.1-4"/>
    <property type="match status" value="1"/>
</dbReference>
<dbReference type="PANTHER" id="PTHR35799">
    <property type="entry name" value="S-RIBOSYLHOMOCYSTEINE LYASE"/>
    <property type="match status" value="1"/>
</dbReference>
<dbReference type="PANTHER" id="PTHR35799:SF1">
    <property type="entry name" value="S-RIBOSYLHOMOCYSTEINE LYASE"/>
    <property type="match status" value="1"/>
</dbReference>
<dbReference type="Pfam" id="PF02664">
    <property type="entry name" value="LuxS"/>
    <property type="match status" value="1"/>
</dbReference>
<dbReference type="PIRSF" id="PIRSF006160">
    <property type="entry name" value="AI2"/>
    <property type="match status" value="1"/>
</dbReference>
<dbReference type="PRINTS" id="PR01487">
    <property type="entry name" value="LUXSPROTEIN"/>
</dbReference>
<dbReference type="SUPFAM" id="SSF63411">
    <property type="entry name" value="LuxS/MPP-like metallohydrolase"/>
    <property type="match status" value="1"/>
</dbReference>
<feature type="chain" id="PRO_0000298001" description="S-ribosylhomocysteine lyase">
    <location>
        <begin position="1"/>
        <end position="157"/>
    </location>
</feature>
<feature type="binding site" evidence="1">
    <location>
        <position position="60"/>
    </location>
    <ligand>
        <name>Fe cation</name>
        <dbReference type="ChEBI" id="CHEBI:24875"/>
    </ligand>
</feature>
<feature type="binding site" evidence="1">
    <location>
        <position position="64"/>
    </location>
    <ligand>
        <name>Fe cation</name>
        <dbReference type="ChEBI" id="CHEBI:24875"/>
    </ligand>
</feature>
<feature type="binding site" evidence="1">
    <location>
        <position position="127"/>
    </location>
    <ligand>
        <name>Fe cation</name>
        <dbReference type="ChEBI" id="CHEBI:24875"/>
    </ligand>
</feature>
<name>LUXS_HELAH</name>
<reference key="1">
    <citation type="journal article" date="2006" name="PLoS Genet.">
        <title>Who ate whom? Adaptive Helicobacter genomic changes that accompanied a host jump from early humans to large felines.</title>
        <authorList>
            <person name="Eppinger M."/>
            <person name="Baar C."/>
            <person name="Linz B."/>
            <person name="Raddatz G."/>
            <person name="Lanz C."/>
            <person name="Keller H."/>
            <person name="Morelli G."/>
            <person name="Gressmann H."/>
            <person name="Achtman M."/>
            <person name="Schuster S.C."/>
        </authorList>
    </citation>
    <scope>NUCLEOTIDE SEQUENCE [LARGE SCALE GENOMIC DNA]</scope>
    <source>
        <strain>Sheeba</strain>
    </source>
</reference>
<accession>Q17VY9</accession>
<sequence>MKTPNTKMNVESFNLDHTKVKAPYVRIADRKKGINGDLIVKYDVRFKQPNQEHMDMPSLHSLEHLVAEIIRNHANYVVDWSPMGCQTGFYLTVLNHDNYTEILEVLEKTMQDVLKATEVPASNEKQCGWAANHTLEGAKNLAHAFLSKRDEWSEIGI</sequence>
<protein>
    <recommendedName>
        <fullName evidence="1">S-ribosylhomocysteine lyase</fullName>
        <ecNumber evidence="1">4.4.1.21</ecNumber>
    </recommendedName>
    <alternativeName>
        <fullName evidence="1">AI-2 synthesis protein</fullName>
    </alternativeName>
    <alternativeName>
        <fullName evidence="1">Autoinducer-2 production protein LuxS</fullName>
    </alternativeName>
</protein>
<comment type="function">
    <text evidence="1">Involved in the synthesis of autoinducer 2 (AI-2) which is secreted by bacteria and is used to communicate both the cell density and the metabolic potential of the environment. The regulation of gene expression in response to changes in cell density is called quorum sensing. Catalyzes the transformation of S-ribosylhomocysteine (RHC) to homocysteine (HC) and 4,5-dihydroxy-2,3-pentadione (DPD).</text>
</comment>
<comment type="catalytic activity">
    <reaction evidence="1">
        <text>S-(5-deoxy-D-ribos-5-yl)-L-homocysteine = (S)-4,5-dihydroxypentane-2,3-dione + L-homocysteine</text>
        <dbReference type="Rhea" id="RHEA:17753"/>
        <dbReference type="ChEBI" id="CHEBI:29484"/>
        <dbReference type="ChEBI" id="CHEBI:58195"/>
        <dbReference type="ChEBI" id="CHEBI:58199"/>
        <dbReference type="EC" id="4.4.1.21"/>
    </reaction>
</comment>
<comment type="cofactor">
    <cofactor evidence="1">
        <name>Fe cation</name>
        <dbReference type="ChEBI" id="CHEBI:24875"/>
    </cofactor>
    <text evidence="1">Binds 1 Fe cation per subunit.</text>
</comment>
<comment type="subunit">
    <text evidence="1">Homodimer.</text>
</comment>
<comment type="similarity">
    <text evidence="1">Belongs to the LuxS family.</text>
</comment>
<organism>
    <name type="scientific">Helicobacter acinonychis (strain Sheeba)</name>
    <dbReference type="NCBI Taxonomy" id="382638"/>
    <lineage>
        <taxon>Bacteria</taxon>
        <taxon>Pseudomonadati</taxon>
        <taxon>Campylobacterota</taxon>
        <taxon>Epsilonproteobacteria</taxon>
        <taxon>Campylobacterales</taxon>
        <taxon>Helicobacteraceae</taxon>
        <taxon>Helicobacter</taxon>
    </lineage>
</organism>
<proteinExistence type="inferred from homology"/>
<gene>
    <name evidence="1" type="primary">luxS</name>
    <name type="ordered locus">Hac_1463</name>
</gene>
<keyword id="KW-0071">Autoinducer synthesis</keyword>
<keyword id="KW-0408">Iron</keyword>
<keyword id="KW-0456">Lyase</keyword>
<keyword id="KW-0479">Metal-binding</keyword>
<keyword id="KW-0673">Quorum sensing</keyword>
<evidence type="ECO:0000255" key="1">
    <source>
        <dbReference type="HAMAP-Rule" id="MF_00091"/>
    </source>
</evidence>